<proteinExistence type="inferred from homology"/>
<gene>
    <name evidence="1" type="primary">rpl19e</name>
    <name type="ordered locus">MJ0473</name>
</gene>
<keyword id="KW-1185">Reference proteome</keyword>
<keyword id="KW-0687">Ribonucleoprotein</keyword>
<keyword id="KW-0689">Ribosomal protein</keyword>
<keyword id="KW-0694">RNA-binding</keyword>
<keyword id="KW-0699">rRNA-binding</keyword>
<comment type="function">
    <text evidence="1">Binds to the 23S rRNA.</text>
</comment>
<comment type="subunit">
    <text evidence="1">Part of the 50S ribosomal subunit.</text>
</comment>
<comment type="similarity">
    <text evidence="1">Belongs to the eukaryotic ribosomal protein eL19 family.</text>
</comment>
<protein>
    <recommendedName>
        <fullName evidence="1">Large ribosomal subunit protein eL19</fullName>
    </recommendedName>
    <alternativeName>
        <fullName evidence="3">50S ribosomal protein L19e</fullName>
    </alternativeName>
</protein>
<sequence length="151" mass="17630">MIIMDVSVQRRMAAEILKCGIERVWIDPTQLDRVKMAMSKDDIRALIKEGVIKKKQKKGISSARVKKLKEQRKKGRRRGPGSRRGAAGARTPPKERWMATIRALRKTLKQLRDSGKIDRKVYRKLYRMAKGGAFRSRSHLFLYMREHELLK</sequence>
<feature type="chain" id="PRO_0000131189" description="Large ribosomal subunit protein eL19">
    <location>
        <begin position="1"/>
        <end position="151"/>
    </location>
</feature>
<feature type="region of interest" description="Disordered" evidence="2">
    <location>
        <begin position="57"/>
        <end position="95"/>
    </location>
</feature>
<feature type="compositionally biased region" description="Basic residues" evidence="2">
    <location>
        <begin position="57"/>
        <end position="81"/>
    </location>
</feature>
<name>RL19E_METJA</name>
<accession>P54043</accession>
<dbReference type="EMBL" id="L77117">
    <property type="protein sequence ID" value="AAB98462.1"/>
    <property type="molecule type" value="Genomic_DNA"/>
</dbReference>
<dbReference type="PIR" id="A64359">
    <property type="entry name" value="A64359"/>
</dbReference>
<dbReference type="SMR" id="P54043"/>
<dbReference type="FunCoup" id="P54043">
    <property type="interactions" value="177"/>
</dbReference>
<dbReference type="STRING" id="243232.MJ_0473"/>
<dbReference type="PaxDb" id="243232-MJ_0473"/>
<dbReference type="EnsemblBacteria" id="AAB98462">
    <property type="protein sequence ID" value="AAB98462"/>
    <property type="gene ID" value="MJ_0473"/>
</dbReference>
<dbReference type="KEGG" id="mja:MJ_0473"/>
<dbReference type="eggNOG" id="arCOG04089">
    <property type="taxonomic scope" value="Archaea"/>
</dbReference>
<dbReference type="HOGENOM" id="CLU_083919_1_1_2"/>
<dbReference type="InParanoid" id="P54043"/>
<dbReference type="PhylomeDB" id="P54043"/>
<dbReference type="Proteomes" id="UP000000805">
    <property type="component" value="Chromosome"/>
</dbReference>
<dbReference type="GO" id="GO:0022625">
    <property type="term" value="C:cytosolic large ribosomal subunit"/>
    <property type="evidence" value="ECO:0000318"/>
    <property type="project" value="GO_Central"/>
</dbReference>
<dbReference type="GO" id="GO:0070180">
    <property type="term" value="F:large ribosomal subunit rRNA binding"/>
    <property type="evidence" value="ECO:0007669"/>
    <property type="project" value="UniProtKB-UniRule"/>
</dbReference>
<dbReference type="GO" id="GO:0003723">
    <property type="term" value="F:RNA binding"/>
    <property type="evidence" value="ECO:0000318"/>
    <property type="project" value="GO_Central"/>
</dbReference>
<dbReference type="GO" id="GO:0003735">
    <property type="term" value="F:structural constituent of ribosome"/>
    <property type="evidence" value="ECO:0000318"/>
    <property type="project" value="GO_Central"/>
</dbReference>
<dbReference type="GO" id="GO:0006412">
    <property type="term" value="P:translation"/>
    <property type="evidence" value="ECO:0007669"/>
    <property type="project" value="UniProtKB-UniRule"/>
</dbReference>
<dbReference type="CDD" id="cd01418">
    <property type="entry name" value="Ribosomal_L19e_A"/>
    <property type="match status" value="1"/>
</dbReference>
<dbReference type="FunFam" id="1.10.1200.240:FF:000003">
    <property type="entry name" value="50S ribosomal protein L19e"/>
    <property type="match status" value="1"/>
</dbReference>
<dbReference type="FunFam" id="1.10.1650.10:FF:000001">
    <property type="entry name" value="Ribosomal protein L19"/>
    <property type="match status" value="1"/>
</dbReference>
<dbReference type="Gene3D" id="1.10.1200.240">
    <property type="match status" value="1"/>
</dbReference>
<dbReference type="Gene3D" id="1.10.1650.10">
    <property type="match status" value="1"/>
</dbReference>
<dbReference type="HAMAP" id="MF_01475">
    <property type="entry name" value="Ribosomal_eL19"/>
    <property type="match status" value="1"/>
</dbReference>
<dbReference type="InterPro" id="IPR035970">
    <property type="entry name" value="60S_ribosomal_eL19_sf"/>
</dbReference>
<dbReference type="InterPro" id="IPR039547">
    <property type="entry name" value="Ribosomal_eL19"/>
</dbReference>
<dbReference type="InterPro" id="IPR033936">
    <property type="entry name" value="Ribosomal_eL19_arc"/>
</dbReference>
<dbReference type="InterPro" id="IPR023638">
    <property type="entry name" value="Ribosomal_eL19_CS"/>
</dbReference>
<dbReference type="InterPro" id="IPR000196">
    <property type="entry name" value="Ribosomal_eL19_dom"/>
</dbReference>
<dbReference type="InterPro" id="IPR015972">
    <property type="entry name" value="Ribosomal_eL19_dom1"/>
</dbReference>
<dbReference type="NCBIfam" id="NF006343">
    <property type="entry name" value="PRK08570.1"/>
    <property type="match status" value="1"/>
</dbReference>
<dbReference type="PANTHER" id="PTHR10722">
    <property type="entry name" value="60S RIBOSOMAL PROTEIN L19"/>
    <property type="match status" value="1"/>
</dbReference>
<dbReference type="Pfam" id="PF01280">
    <property type="entry name" value="Ribosomal_L19e"/>
    <property type="match status" value="1"/>
</dbReference>
<dbReference type="Pfam" id="PF25476">
    <property type="entry name" value="Ribosomal_L19e_C"/>
    <property type="match status" value="1"/>
</dbReference>
<dbReference type="SMART" id="SM01416">
    <property type="entry name" value="Ribosomal_L19e"/>
    <property type="match status" value="1"/>
</dbReference>
<dbReference type="SUPFAM" id="SSF48140">
    <property type="entry name" value="Ribosomal protein L19 (L19e)"/>
    <property type="match status" value="1"/>
</dbReference>
<dbReference type="PROSITE" id="PS00526">
    <property type="entry name" value="RIBOSOMAL_L19E"/>
    <property type="match status" value="1"/>
</dbReference>
<organism>
    <name type="scientific">Methanocaldococcus jannaschii (strain ATCC 43067 / DSM 2661 / JAL-1 / JCM 10045 / NBRC 100440)</name>
    <name type="common">Methanococcus jannaschii</name>
    <dbReference type="NCBI Taxonomy" id="243232"/>
    <lineage>
        <taxon>Archaea</taxon>
        <taxon>Methanobacteriati</taxon>
        <taxon>Methanobacteriota</taxon>
        <taxon>Methanomada group</taxon>
        <taxon>Methanococci</taxon>
        <taxon>Methanococcales</taxon>
        <taxon>Methanocaldococcaceae</taxon>
        <taxon>Methanocaldococcus</taxon>
    </lineage>
</organism>
<evidence type="ECO:0000255" key="1">
    <source>
        <dbReference type="HAMAP-Rule" id="MF_01475"/>
    </source>
</evidence>
<evidence type="ECO:0000256" key="2">
    <source>
        <dbReference type="SAM" id="MobiDB-lite"/>
    </source>
</evidence>
<evidence type="ECO:0000305" key="3"/>
<reference key="1">
    <citation type="journal article" date="1996" name="Science">
        <title>Complete genome sequence of the methanogenic archaeon, Methanococcus jannaschii.</title>
        <authorList>
            <person name="Bult C.J."/>
            <person name="White O."/>
            <person name="Olsen G.J."/>
            <person name="Zhou L."/>
            <person name="Fleischmann R.D."/>
            <person name="Sutton G.G."/>
            <person name="Blake J.A."/>
            <person name="FitzGerald L.M."/>
            <person name="Clayton R.A."/>
            <person name="Gocayne J.D."/>
            <person name="Kerlavage A.R."/>
            <person name="Dougherty B.A."/>
            <person name="Tomb J.-F."/>
            <person name="Adams M.D."/>
            <person name="Reich C.I."/>
            <person name="Overbeek R."/>
            <person name="Kirkness E.F."/>
            <person name="Weinstock K.G."/>
            <person name="Merrick J.M."/>
            <person name="Glodek A."/>
            <person name="Scott J.L."/>
            <person name="Geoghagen N.S.M."/>
            <person name="Weidman J.F."/>
            <person name="Fuhrmann J.L."/>
            <person name="Nguyen D."/>
            <person name="Utterback T.R."/>
            <person name="Kelley J.M."/>
            <person name="Peterson J.D."/>
            <person name="Sadow P.W."/>
            <person name="Hanna M.C."/>
            <person name="Cotton M.D."/>
            <person name="Roberts K.M."/>
            <person name="Hurst M.A."/>
            <person name="Kaine B.P."/>
            <person name="Borodovsky M."/>
            <person name="Klenk H.-P."/>
            <person name="Fraser C.M."/>
            <person name="Smith H.O."/>
            <person name="Woese C.R."/>
            <person name="Venter J.C."/>
        </authorList>
    </citation>
    <scope>NUCLEOTIDE SEQUENCE [LARGE SCALE GENOMIC DNA]</scope>
    <source>
        <strain>ATCC 43067 / DSM 2661 / JAL-1 / JCM 10045 / NBRC 100440</strain>
    </source>
</reference>